<keyword id="KW-0032">Aminotransferase</keyword>
<keyword id="KW-0663">Pyridoxal phosphate</keyword>
<keyword id="KW-1185">Reference proteome</keyword>
<keyword id="KW-0808">Transferase</keyword>
<organism>
    <name type="scientific">Lachnospira eligens (strain ATCC 27750 / DSM 3376 / VPI C15-48 / C15-B4)</name>
    <name type="common">Eubacterium eligens</name>
    <dbReference type="NCBI Taxonomy" id="515620"/>
    <lineage>
        <taxon>Bacteria</taxon>
        <taxon>Bacillati</taxon>
        <taxon>Bacillota</taxon>
        <taxon>Clostridia</taxon>
        <taxon>Lachnospirales</taxon>
        <taxon>Lachnospiraceae</taxon>
        <taxon>Lachnospira</taxon>
    </lineage>
</organism>
<accession>C4Z4Y1</accession>
<name>DAPAT_LACE2</name>
<feature type="chain" id="PRO_1000215830" description="LL-diaminopimelate aminotransferase">
    <location>
        <begin position="1"/>
        <end position="404"/>
    </location>
</feature>
<feature type="binding site" evidence="1">
    <location>
        <position position="15"/>
    </location>
    <ligand>
        <name>substrate</name>
    </ligand>
</feature>
<feature type="binding site" evidence="1">
    <location>
        <position position="42"/>
    </location>
    <ligand>
        <name>substrate</name>
    </ligand>
</feature>
<feature type="binding site" evidence="1">
    <location>
        <position position="72"/>
    </location>
    <ligand>
        <name>pyridoxal 5'-phosphate</name>
        <dbReference type="ChEBI" id="CHEBI:597326"/>
    </ligand>
</feature>
<feature type="binding site" evidence="1">
    <location>
        <begin position="108"/>
        <end position="109"/>
    </location>
    <ligand>
        <name>pyridoxal 5'-phosphate</name>
        <dbReference type="ChEBI" id="CHEBI:597326"/>
    </ligand>
</feature>
<feature type="binding site" evidence="1">
    <location>
        <position position="109"/>
    </location>
    <ligand>
        <name>substrate</name>
    </ligand>
</feature>
<feature type="binding site" evidence="1">
    <location>
        <position position="132"/>
    </location>
    <ligand>
        <name>pyridoxal 5'-phosphate</name>
        <dbReference type="ChEBI" id="CHEBI:597326"/>
    </ligand>
</feature>
<feature type="binding site" evidence="1">
    <location>
        <position position="132"/>
    </location>
    <ligand>
        <name>substrate</name>
    </ligand>
</feature>
<feature type="binding site" evidence="1">
    <location>
        <position position="188"/>
    </location>
    <ligand>
        <name>pyridoxal 5'-phosphate</name>
        <dbReference type="ChEBI" id="CHEBI:597326"/>
    </ligand>
</feature>
<feature type="binding site" evidence="1">
    <location>
        <position position="188"/>
    </location>
    <ligand>
        <name>substrate</name>
    </ligand>
</feature>
<feature type="binding site" evidence="1">
    <location>
        <position position="219"/>
    </location>
    <ligand>
        <name>pyridoxal 5'-phosphate</name>
        <dbReference type="ChEBI" id="CHEBI:597326"/>
    </ligand>
</feature>
<feature type="binding site" evidence="1">
    <location>
        <begin position="247"/>
        <end position="249"/>
    </location>
    <ligand>
        <name>pyridoxal 5'-phosphate</name>
        <dbReference type="ChEBI" id="CHEBI:597326"/>
    </ligand>
</feature>
<feature type="binding site" evidence="1">
    <location>
        <position position="258"/>
    </location>
    <ligand>
        <name>pyridoxal 5'-phosphate</name>
        <dbReference type="ChEBI" id="CHEBI:597326"/>
    </ligand>
</feature>
<feature type="binding site" evidence="1">
    <location>
        <position position="288"/>
    </location>
    <ligand>
        <name>pyridoxal 5'-phosphate</name>
        <dbReference type="ChEBI" id="CHEBI:597326"/>
    </ligand>
</feature>
<feature type="binding site" evidence="1">
    <location>
        <position position="288"/>
    </location>
    <ligand>
        <name>substrate</name>
    </ligand>
</feature>
<feature type="binding site" evidence="1">
    <location>
        <position position="384"/>
    </location>
    <ligand>
        <name>substrate</name>
    </ligand>
</feature>
<feature type="modified residue" description="N6-(pyridoxal phosphate)lysine" evidence="1">
    <location>
        <position position="250"/>
    </location>
</feature>
<dbReference type="EC" id="2.6.1.83" evidence="1"/>
<dbReference type="EMBL" id="CP001104">
    <property type="protein sequence ID" value="ACR71685.1"/>
    <property type="molecule type" value="Genomic_DNA"/>
</dbReference>
<dbReference type="RefSeq" id="WP_012738921.1">
    <property type="nucleotide sequence ID" value="NC_012778.1"/>
</dbReference>
<dbReference type="SMR" id="C4Z4Y1"/>
<dbReference type="STRING" id="515620.EUBELI_00672"/>
<dbReference type="GeneID" id="41355417"/>
<dbReference type="KEGG" id="eel:EUBELI_00672"/>
<dbReference type="eggNOG" id="COG0436">
    <property type="taxonomic scope" value="Bacteria"/>
</dbReference>
<dbReference type="HOGENOM" id="CLU_051433_0_0_9"/>
<dbReference type="UniPathway" id="UPA00034">
    <property type="reaction ID" value="UER00466"/>
</dbReference>
<dbReference type="Proteomes" id="UP000001476">
    <property type="component" value="Chromosome"/>
</dbReference>
<dbReference type="GO" id="GO:0010285">
    <property type="term" value="F:L,L-diaminopimelate aminotransferase activity"/>
    <property type="evidence" value="ECO:0007669"/>
    <property type="project" value="UniProtKB-UniRule"/>
</dbReference>
<dbReference type="GO" id="GO:0030170">
    <property type="term" value="F:pyridoxal phosphate binding"/>
    <property type="evidence" value="ECO:0007669"/>
    <property type="project" value="UniProtKB-UniRule"/>
</dbReference>
<dbReference type="GO" id="GO:0033362">
    <property type="term" value="P:lysine biosynthetic process via diaminopimelate, diaminopimelate-aminotransferase pathway"/>
    <property type="evidence" value="ECO:0007669"/>
    <property type="project" value="UniProtKB-UniRule"/>
</dbReference>
<dbReference type="CDD" id="cd00609">
    <property type="entry name" value="AAT_like"/>
    <property type="match status" value="1"/>
</dbReference>
<dbReference type="FunFam" id="3.40.640.10:FF:000099">
    <property type="entry name" value="LL-diaminopimelate aminotransferase, chloroplastic"/>
    <property type="match status" value="1"/>
</dbReference>
<dbReference type="Gene3D" id="3.90.1150.10">
    <property type="entry name" value="Aspartate Aminotransferase, domain 1"/>
    <property type="match status" value="1"/>
</dbReference>
<dbReference type="Gene3D" id="3.40.640.10">
    <property type="entry name" value="Type I PLP-dependent aspartate aminotransferase-like (Major domain)"/>
    <property type="match status" value="1"/>
</dbReference>
<dbReference type="HAMAP" id="MF_01642">
    <property type="entry name" value="DapL_aminotrans_1"/>
    <property type="match status" value="1"/>
</dbReference>
<dbReference type="InterPro" id="IPR004839">
    <property type="entry name" value="Aminotransferase_I/II_large"/>
</dbReference>
<dbReference type="InterPro" id="IPR019942">
    <property type="entry name" value="DapL/ALD1"/>
</dbReference>
<dbReference type="InterPro" id="IPR015424">
    <property type="entry name" value="PyrdxlP-dep_Trfase"/>
</dbReference>
<dbReference type="InterPro" id="IPR015421">
    <property type="entry name" value="PyrdxlP-dep_Trfase_major"/>
</dbReference>
<dbReference type="InterPro" id="IPR015422">
    <property type="entry name" value="PyrdxlP-dep_Trfase_small"/>
</dbReference>
<dbReference type="NCBIfam" id="TIGR03542">
    <property type="entry name" value="DAPAT_plant"/>
    <property type="match status" value="1"/>
</dbReference>
<dbReference type="PANTHER" id="PTHR43144">
    <property type="entry name" value="AMINOTRANSFERASE"/>
    <property type="match status" value="1"/>
</dbReference>
<dbReference type="Pfam" id="PF00155">
    <property type="entry name" value="Aminotran_1_2"/>
    <property type="match status" value="1"/>
</dbReference>
<dbReference type="SUPFAM" id="SSF53383">
    <property type="entry name" value="PLP-dependent transferases"/>
    <property type="match status" value="1"/>
</dbReference>
<reference key="1">
    <citation type="journal article" date="2009" name="Proc. Natl. Acad. Sci. U.S.A.">
        <title>Characterizing a model human gut microbiota composed of members of its two dominant bacterial phyla.</title>
        <authorList>
            <person name="Mahowald M.A."/>
            <person name="Rey F.E."/>
            <person name="Seedorf H."/>
            <person name="Turnbaugh P.J."/>
            <person name="Fulton R.S."/>
            <person name="Wollam A."/>
            <person name="Shah N."/>
            <person name="Wang C."/>
            <person name="Magrini V."/>
            <person name="Wilson R.K."/>
            <person name="Cantarel B.L."/>
            <person name="Coutinho P.M."/>
            <person name="Henrissat B."/>
            <person name="Crock L.W."/>
            <person name="Russell A."/>
            <person name="Verberkmoes N.C."/>
            <person name="Hettich R.L."/>
            <person name="Gordon J.I."/>
        </authorList>
    </citation>
    <scope>NUCLEOTIDE SEQUENCE [LARGE SCALE GENOMIC DNA]</scope>
    <source>
        <strain>ATCC 27750 / DSM 3376 / VPI C15-48 / C15-B4</strain>
    </source>
</reference>
<protein>
    <recommendedName>
        <fullName evidence="1">LL-diaminopimelate aminotransferase</fullName>
        <shortName evidence="1">DAP-AT</shortName>
        <shortName evidence="1">DAP-aminotransferase</shortName>
        <shortName evidence="1">LL-DAP-aminotransferase</shortName>
        <ecNumber evidence="1">2.6.1.83</ecNumber>
    </recommendedName>
</protein>
<sequence>MFKINDNYLKLPGSYLFSTIGKKVAAYQQANPDKEIIRLGIGDVTQPLAPAVIDALHKSVDEMGHAETFHGYAPDLGYEFLRSAIADHDYKKRGCDISADEIFVSDGAKSDSGNIGDIFSVDNKIAVCDPVYPVYVDTNAMAGRTGDYIPEKQAWSNVVYMPCTAETNFAPELPKETPDIIYLCFPNNPTGSTITKDELQKWVDYANKVGAVIIYDAAYEAYISEPDVPHTIYECEGARTCAIELRSFSKNAGFTGVRLGFTVIPKDLKCGDVTLHSLWARRHGTKFNGAPYIVQRAGEAVYSEAGQKQTGEQIAYYMNNAKTILEGLKSAGYTVSGGVNAPYIWLKTPDKMTSWEFFDYLLEKANVVGTPGSGFGPSGEGYFRLTAFGSYENTVKALERIKAL</sequence>
<comment type="function">
    <text evidence="1">Involved in the synthesis of meso-diaminopimelate (m-DAP or DL-DAP), required for both lysine and peptidoglycan biosynthesis. Catalyzes the direct conversion of tetrahydrodipicolinate to LL-diaminopimelate.</text>
</comment>
<comment type="catalytic activity">
    <reaction evidence="1">
        <text>(2S,6S)-2,6-diaminopimelate + 2-oxoglutarate = (S)-2,3,4,5-tetrahydrodipicolinate + L-glutamate + H2O + H(+)</text>
        <dbReference type="Rhea" id="RHEA:23988"/>
        <dbReference type="ChEBI" id="CHEBI:15377"/>
        <dbReference type="ChEBI" id="CHEBI:15378"/>
        <dbReference type="ChEBI" id="CHEBI:16810"/>
        <dbReference type="ChEBI" id="CHEBI:16845"/>
        <dbReference type="ChEBI" id="CHEBI:29985"/>
        <dbReference type="ChEBI" id="CHEBI:57609"/>
        <dbReference type="EC" id="2.6.1.83"/>
    </reaction>
</comment>
<comment type="cofactor">
    <cofactor evidence="1">
        <name>pyridoxal 5'-phosphate</name>
        <dbReference type="ChEBI" id="CHEBI:597326"/>
    </cofactor>
</comment>
<comment type="pathway">
    <text evidence="1">Amino-acid biosynthesis; L-lysine biosynthesis via DAP pathway; LL-2,6-diaminopimelate from (S)-tetrahydrodipicolinate (aminotransferase route): step 1/1.</text>
</comment>
<comment type="subunit">
    <text evidence="1">Homodimer.</text>
</comment>
<comment type="similarity">
    <text evidence="1">Belongs to the class-I pyridoxal-phosphate-dependent aminotransferase family. LL-diaminopimelate aminotransferase subfamily.</text>
</comment>
<evidence type="ECO:0000255" key="1">
    <source>
        <dbReference type="HAMAP-Rule" id="MF_01642"/>
    </source>
</evidence>
<proteinExistence type="inferred from homology"/>
<gene>
    <name evidence="1" type="primary">dapL</name>
    <name type="ordered locus">EUBELI_00672</name>
</gene>